<gene>
    <name evidence="1" type="primary">rplQ</name>
    <name type="ordered locus">TRQ2_1365</name>
</gene>
<accession>B1LBL1</accession>
<keyword id="KW-0687">Ribonucleoprotein</keyword>
<keyword id="KW-0689">Ribosomal protein</keyword>
<protein>
    <recommendedName>
        <fullName evidence="1">Large ribosomal subunit protein bL17</fullName>
    </recommendedName>
    <alternativeName>
        <fullName evidence="2">50S ribosomal protein L17</fullName>
    </alternativeName>
</protein>
<name>RL17_THESQ</name>
<proteinExistence type="inferred from homology"/>
<organism>
    <name type="scientific">Thermotoga sp. (strain RQ2)</name>
    <dbReference type="NCBI Taxonomy" id="126740"/>
    <lineage>
        <taxon>Bacteria</taxon>
        <taxon>Thermotogati</taxon>
        <taxon>Thermotogota</taxon>
        <taxon>Thermotogae</taxon>
        <taxon>Thermotogales</taxon>
        <taxon>Thermotogaceae</taxon>
        <taxon>Thermotoga</taxon>
    </lineage>
</organism>
<reference key="1">
    <citation type="journal article" date="2011" name="J. Bacteriol.">
        <title>Genome sequence of Thermotoga sp. strain RQ2, a hyperthermophilic bacterium isolated from a geothermally heated region of the seafloor near Ribeira Quente, the Azores.</title>
        <authorList>
            <person name="Swithers K.S."/>
            <person name="DiPippo J.L."/>
            <person name="Bruce D.C."/>
            <person name="Detter C."/>
            <person name="Tapia R."/>
            <person name="Han S."/>
            <person name="Saunders E."/>
            <person name="Goodwin L.A."/>
            <person name="Han J."/>
            <person name="Woyke T."/>
            <person name="Pitluck S."/>
            <person name="Pennacchio L."/>
            <person name="Nolan M."/>
            <person name="Mikhailova N."/>
            <person name="Lykidis A."/>
            <person name="Land M.L."/>
            <person name="Brettin T."/>
            <person name="Stetter K.O."/>
            <person name="Nelson K.E."/>
            <person name="Gogarten J.P."/>
            <person name="Noll K.M."/>
        </authorList>
    </citation>
    <scope>NUCLEOTIDE SEQUENCE [LARGE SCALE GENOMIC DNA]</scope>
    <source>
        <strain>RQ2</strain>
    </source>
</reference>
<comment type="subunit">
    <text evidence="1">Part of the 50S ribosomal subunit. Contacts protein L32.</text>
</comment>
<comment type="similarity">
    <text evidence="1">Belongs to the bacterial ribosomal protein bL17 family.</text>
</comment>
<dbReference type="EMBL" id="CP000969">
    <property type="protein sequence ID" value="ACB09709.1"/>
    <property type="molecule type" value="Genomic_DNA"/>
</dbReference>
<dbReference type="RefSeq" id="WP_011943803.1">
    <property type="nucleotide sequence ID" value="NC_010483.1"/>
</dbReference>
<dbReference type="SMR" id="B1LBL1"/>
<dbReference type="KEGG" id="trq:TRQ2_1365"/>
<dbReference type="HOGENOM" id="CLU_074407_2_0_0"/>
<dbReference type="Proteomes" id="UP000001687">
    <property type="component" value="Chromosome"/>
</dbReference>
<dbReference type="GO" id="GO:0022625">
    <property type="term" value="C:cytosolic large ribosomal subunit"/>
    <property type="evidence" value="ECO:0007669"/>
    <property type="project" value="TreeGrafter"/>
</dbReference>
<dbReference type="GO" id="GO:0003735">
    <property type="term" value="F:structural constituent of ribosome"/>
    <property type="evidence" value="ECO:0007669"/>
    <property type="project" value="InterPro"/>
</dbReference>
<dbReference type="GO" id="GO:0006412">
    <property type="term" value="P:translation"/>
    <property type="evidence" value="ECO:0007669"/>
    <property type="project" value="UniProtKB-UniRule"/>
</dbReference>
<dbReference type="FunFam" id="3.90.1030.10:FF:000016">
    <property type="entry name" value="50S ribosomal protein L17"/>
    <property type="match status" value="1"/>
</dbReference>
<dbReference type="Gene3D" id="3.90.1030.10">
    <property type="entry name" value="Ribosomal protein L17"/>
    <property type="match status" value="1"/>
</dbReference>
<dbReference type="HAMAP" id="MF_01368">
    <property type="entry name" value="Ribosomal_bL17"/>
    <property type="match status" value="1"/>
</dbReference>
<dbReference type="InterPro" id="IPR000456">
    <property type="entry name" value="Ribosomal_bL17"/>
</dbReference>
<dbReference type="InterPro" id="IPR036373">
    <property type="entry name" value="Ribosomal_bL17_sf"/>
</dbReference>
<dbReference type="NCBIfam" id="TIGR00059">
    <property type="entry name" value="L17"/>
    <property type="match status" value="1"/>
</dbReference>
<dbReference type="PANTHER" id="PTHR14413:SF16">
    <property type="entry name" value="LARGE RIBOSOMAL SUBUNIT PROTEIN BL17M"/>
    <property type="match status" value="1"/>
</dbReference>
<dbReference type="PANTHER" id="PTHR14413">
    <property type="entry name" value="RIBOSOMAL PROTEIN L17"/>
    <property type="match status" value="1"/>
</dbReference>
<dbReference type="Pfam" id="PF01196">
    <property type="entry name" value="Ribosomal_L17"/>
    <property type="match status" value="1"/>
</dbReference>
<dbReference type="SUPFAM" id="SSF64263">
    <property type="entry name" value="Prokaryotic ribosomal protein L17"/>
    <property type="match status" value="1"/>
</dbReference>
<evidence type="ECO:0000255" key="1">
    <source>
        <dbReference type="HAMAP-Rule" id="MF_01368"/>
    </source>
</evidence>
<evidence type="ECO:0000305" key="2"/>
<feature type="chain" id="PRO_1000144499" description="Large ribosomal subunit protein bL17">
    <location>
        <begin position="1"/>
        <end position="131"/>
    </location>
</feature>
<sequence length="131" mass="14751">MRHRVKRHRLGRYGSHRKSLLRNLSREIVEHGSIVTTTAKAKALKILMDKLVSKAIEAATTDDKAKSVHLRRQINAVLGDRRLTNKLVDEIAKNYVGRHGGYVRVLRIGFRRGDAAEMSLVQLVEASSQEG</sequence>